<organism>
    <name type="scientific">Mus musculus</name>
    <name type="common">Mouse</name>
    <dbReference type="NCBI Taxonomy" id="10090"/>
    <lineage>
        <taxon>Eukaryota</taxon>
        <taxon>Metazoa</taxon>
        <taxon>Chordata</taxon>
        <taxon>Craniata</taxon>
        <taxon>Vertebrata</taxon>
        <taxon>Euteleostomi</taxon>
        <taxon>Mammalia</taxon>
        <taxon>Eutheria</taxon>
        <taxon>Euarchontoglires</taxon>
        <taxon>Glires</taxon>
        <taxon>Rodentia</taxon>
        <taxon>Myomorpha</taxon>
        <taxon>Muroidea</taxon>
        <taxon>Muridae</taxon>
        <taxon>Murinae</taxon>
        <taxon>Mus</taxon>
        <taxon>Mus</taxon>
    </lineage>
</organism>
<protein>
    <recommendedName>
        <fullName evidence="4">Small ribosomal subunit protein eS8</fullName>
    </recommendedName>
    <alternativeName>
        <fullName>40S ribosomal protein S8</fullName>
    </alternativeName>
</protein>
<gene>
    <name type="primary">Rps8</name>
</gene>
<name>RS8_MOUSE</name>
<feature type="initiator methionine" description="Removed" evidence="1">
    <location>
        <position position="1"/>
    </location>
</feature>
<feature type="chain" id="PRO_0000122241" description="Small ribosomal subunit protein eS8">
    <location>
        <begin position="2"/>
        <end position="208"/>
    </location>
</feature>
<feature type="region of interest" description="Disordered" evidence="2">
    <location>
        <begin position="1"/>
        <end position="27"/>
    </location>
</feature>
<feature type="compositionally biased region" description="Basic residues" evidence="2">
    <location>
        <begin position="8"/>
        <end position="26"/>
    </location>
</feature>
<feature type="modified residue" description="N6-acetyllysine" evidence="8">
    <location>
        <position position="37"/>
    </location>
</feature>
<feature type="modified residue" description="N6-acetyllysine" evidence="8">
    <location>
        <position position="128"/>
    </location>
</feature>
<feature type="modified residue" description="Phosphothreonine" evidence="7">
    <location>
        <position position="130"/>
    </location>
</feature>
<feature type="modified residue" description="Phosphoserine" evidence="1">
    <location>
        <position position="160"/>
    </location>
</feature>
<feature type="lipid moiety-binding region" description="N-myristoyl glycine" evidence="1">
    <location>
        <position position="2"/>
    </location>
</feature>
<feature type="cross-link" description="Glycyl lysine isopeptide (Lys-Gly) (interchain with G-Cter in SUMO2)" evidence="1">
    <location>
        <position position="170"/>
    </location>
</feature>
<feature type="cross-link" description="Glycyl lysine isopeptide (Lys-Gly) (interchain with G-Cter in SUMO2)" evidence="1">
    <location>
        <position position="193"/>
    </location>
</feature>
<feature type="sequence conflict" description="In Ref. 2; BAC40485." evidence="4" ref="2">
    <original>E</original>
    <variation>V</variation>
    <location>
        <position position="70"/>
    </location>
</feature>
<dbReference type="EMBL" id="X73829">
    <property type="protein sequence ID" value="CAA52050.1"/>
    <property type="molecule type" value="mRNA"/>
</dbReference>
<dbReference type="EMBL" id="AK009023">
    <property type="protein sequence ID" value="BAB26032.1"/>
    <property type="molecule type" value="mRNA"/>
</dbReference>
<dbReference type="EMBL" id="AK010650">
    <property type="protein sequence ID" value="BAB27090.1"/>
    <property type="molecule type" value="mRNA"/>
</dbReference>
<dbReference type="EMBL" id="AK011048">
    <property type="protein sequence ID" value="BAB27359.1"/>
    <property type="molecule type" value="mRNA"/>
</dbReference>
<dbReference type="EMBL" id="AK011058">
    <property type="protein sequence ID" value="BAB27366.1"/>
    <property type="molecule type" value="mRNA"/>
</dbReference>
<dbReference type="EMBL" id="AK011642">
    <property type="protein sequence ID" value="BAB27754.1"/>
    <property type="molecule type" value="mRNA"/>
</dbReference>
<dbReference type="EMBL" id="AK012435">
    <property type="protein sequence ID" value="BAB28236.1"/>
    <property type="molecule type" value="mRNA"/>
</dbReference>
<dbReference type="EMBL" id="AK012665">
    <property type="protein sequence ID" value="BAB28394.1"/>
    <property type="molecule type" value="mRNA"/>
</dbReference>
<dbReference type="EMBL" id="AK088660">
    <property type="protein sequence ID" value="BAC40485.1"/>
    <property type="molecule type" value="mRNA"/>
</dbReference>
<dbReference type="EMBL" id="BC027217">
    <property type="protein sequence ID" value="AAH27217.1"/>
    <property type="molecule type" value="mRNA"/>
</dbReference>
<dbReference type="EMBL" id="BC051446">
    <property type="protein sequence ID" value="AAH51446.1"/>
    <property type="molecule type" value="mRNA"/>
</dbReference>
<dbReference type="EMBL" id="BC081465">
    <property type="protein sequence ID" value="AAH81465.1"/>
    <property type="molecule type" value="mRNA"/>
</dbReference>
<dbReference type="CCDS" id="CCDS18530.1"/>
<dbReference type="PIR" id="S42110">
    <property type="entry name" value="S42110"/>
</dbReference>
<dbReference type="RefSeq" id="NP_033124.1">
    <property type="nucleotide sequence ID" value="NM_009098.2"/>
</dbReference>
<dbReference type="PDB" id="7CPU">
    <property type="method" value="EM"/>
    <property type="resolution" value="2.82 A"/>
    <property type="chains" value="SI=1-208"/>
</dbReference>
<dbReference type="PDB" id="7CPV">
    <property type="method" value="EM"/>
    <property type="resolution" value="3.03 A"/>
    <property type="chains" value="SI=1-208"/>
</dbReference>
<dbReference type="PDB" id="7LS1">
    <property type="method" value="EM"/>
    <property type="resolution" value="3.30 A"/>
    <property type="chains" value="u=1-208"/>
</dbReference>
<dbReference type="PDB" id="7LS2">
    <property type="method" value="EM"/>
    <property type="resolution" value="3.10 A"/>
    <property type="chains" value="u=1-208"/>
</dbReference>
<dbReference type="PDBsum" id="7CPU"/>
<dbReference type="PDBsum" id="7CPV"/>
<dbReference type="PDBsum" id="7LS1"/>
<dbReference type="PDBsum" id="7LS2"/>
<dbReference type="EMDB" id="EMD-23500"/>
<dbReference type="EMDB" id="EMD-23501"/>
<dbReference type="EMDB" id="EMD-30432"/>
<dbReference type="EMDB" id="EMD-30433"/>
<dbReference type="SMR" id="P62242"/>
<dbReference type="BioGRID" id="203017">
    <property type="interactions" value="115"/>
</dbReference>
<dbReference type="ComplexPortal" id="CPX-5261">
    <property type="entry name" value="40S cytosolic small ribosomal subunit"/>
</dbReference>
<dbReference type="CORUM" id="P62242"/>
<dbReference type="FunCoup" id="P62242">
    <property type="interactions" value="2532"/>
</dbReference>
<dbReference type="IntAct" id="P62242">
    <property type="interactions" value="6"/>
</dbReference>
<dbReference type="MINT" id="P62242"/>
<dbReference type="STRING" id="10090.ENSMUSP00000099757"/>
<dbReference type="GlyGen" id="P62242">
    <property type="glycosylation" value="1 site, 1 O-linked glycan (1 site)"/>
</dbReference>
<dbReference type="iPTMnet" id="P62242"/>
<dbReference type="PhosphoSitePlus" id="P62242"/>
<dbReference type="SwissPalm" id="P62242"/>
<dbReference type="jPOST" id="P62242"/>
<dbReference type="PaxDb" id="10090-ENSMUSP00000099757"/>
<dbReference type="PeptideAtlas" id="P62242"/>
<dbReference type="ProteomicsDB" id="262736"/>
<dbReference type="Pumba" id="P62242"/>
<dbReference type="TopDownProteomics" id="P62242"/>
<dbReference type="Antibodypedia" id="32545">
    <property type="antibodies" value="172 antibodies from 26 providers"/>
</dbReference>
<dbReference type="DNASU" id="20116"/>
<dbReference type="Ensembl" id="ENSMUST00000102696.5">
    <property type="protein sequence ID" value="ENSMUSP00000099757.5"/>
    <property type="gene ID" value="ENSMUSG00000047675.16"/>
</dbReference>
<dbReference type="GeneID" id="20116"/>
<dbReference type="KEGG" id="mmu:20116"/>
<dbReference type="UCSC" id="uc008uic.1">
    <property type="organism name" value="mouse"/>
</dbReference>
<dbReference type="AGR" id="MGI:98166"/>
<dbReference type="CTD" id="6202"/>
<dbReference type="MGI" id="MGI:98166">
    <property type="gene designation" value="Rps8"/>
</dbReference>
<dbReference type="VEuPathDB" id="HostDB:ENSMUSG00000047675"/>
<dbReference type="eggNOG" id="KOG3283">
    <property type="taxonomic scope" value="Eukaryota"/>
</dbReference>
<dbReference type="GeneTree" id="ENSGT00390000012433"/>
<dbReference type="HOGENOM" id="CLU_080597_1_1_1"/>
<dbReference type="InParanoid" id="P62242"/>
<dbReference type="OMA" id="QRPHYRK"/>
<dbReference type="OrthoDB" id="1703270at2759"/>
<dbReference type="PhylomeDB" id="P62242"/>
<dbReference type="TreeFam" id="TF300041"/>
<dbReference type="Reactome" id="R-MMU-156827">
    <property type="pathway name" value="L13a-mediated translational silencing of Ceruloplasmin expression"/>
</dbReference>
<dbReference type="Reactome" id="R-MMU-1799339">
    <property type="pathway name" value="SRP-dependent cotranslational protein targeting to membrane"/>
</dbReference>
<dbReference type="Reactome" id="R-MMU-6791226">
    <property type="pathway name" value="Major pathway of rRNA processing in the nucleolus and cytosol"/>
</dbReference>
<dbReference type="Reactome" id="R-MMU-72649">
    <property type="pathway name" value="Translation initiation complex formation"/>
</dbReference>
<dbReference type="Reactome" id="R-MMU-72689">
    <property type="pathway name" value="Formation of a pool of free 40S subunits"/>
</dbReference>
<dbReference type="Reactome" id="R-MMU-72695">
    <property type="pathway name" value="Formation of the ternary complex, and subsequently, the 43S complex"/>
</dbReference>
<dbReference type="Reactome" id="R-MMU-72702">
    <property type="pathway name" value="Ribosomal scanning and start codon recognition"/>
</dbReference>
<dbReference type="Reactome" id="R-MMU-72706">
    <property type="pathway name" value="GTP hydrolysis and joining of the 60S ribosomal subunit"/>
</dbReference>
<dbReference type="Reactome" id="R-MMU-975956">
    <property type="pathway name" value="Nonsense Mediated Decay (NMD) independent of the Exon Junction Complex (EJC)"/>
</dbReference>
<dbReference type="Reactome" id="R-MMU-975957">
    <property type="pathway name" value="Nonsense Mediated Decay (NMD) enhanced by the Exon Junction Complex (EJC)"/>
</dbReference>
<dbReference type="BioGRID-ORCS" id="20116">
    <property type="hits" value="25 hits in 61 CRISPR screens"/>
</dbReference>
<dbReference type="CD-CODE" id="5E82D60E">
    <property type="entry name" value="Nucleolus"/>
</dbReference>
<dbReference type="CD-CODE" id="CE726F99">
    <property type="entry name" value="Postsynaptic density"/>
</dbReference>
<dbReference type="CD-CODE" id="DE1E139C">
    <property type="entry name" value="Chromatoid body"/>
</dbReference>
<dbReference type="ChiTaRS" id="Rps8">
    <property type="organism name" value="mouse"/>
</dbReference>
<dbReference type="PRO" id="PR:P62242"/>
<dbReference type="Proteomes" id="UP000000589">
    <property type="component" value="Chromosome 4"/>
</dbReference>
<dbReference type="RNAct" id="P62242">
    <property type="molecule type" value="protein"/>
</dbReference>
<dbReference type="Bgee" id="ENSMUSG00000047675">
    <property type="expression patterns" value="Expressed in ventricular zone and 64 other cell types or tissues"/>
</dbReference>
<dbReference type="ExpressionAtlas" id="P62242">
    <property type="expression patterns" value="baseline and differential"/>
</dbReference>
<dbReference type="GO" id="GO:0005737">
    <property type="term" value="C:cytoplasm"/>
    <property type="evidence" value="ECO:0000303"/>
    <property type="project" value="ComplexPortal"/>
</dbReference>
<dbReference type="GO" id="GO:0005829">
    <property type="term" value="C:cytosol"/>
    <property type="evidence" value="ECO:0000304"/>
    <property type="project" value="Reactome"/>
</dbReference>
<dbReference type="GO" id="GO:0022627">
    <property type="term" value="C:cytosolic small ribosomal subunit"/>
    <property type="evidence" value="ECO:0000314"/>
    <property type="project" value="UniProtKB"/>
</dbReference>
<dbReference type="GO" id="GO:0005783">
    <property type="term" value="C:endoplasmic reticulum"/>
    <property type="evidence" value="ECO:0007669"/>
    <property type="project" value="Ensembl"/>
</dbReference>
<dbReference type="GO" id="GO:0016020">
    <property type="term" value="C:membrane"/>
    <property type="evidence" value="ECO:0007669"/>
    <property type="project" value="UniProtKB-SubCell"/>
</dbReference>
<dbReference type="GO" id="GO:0005730">
    <property type="term" value="C:nucleolus"/>
    <property type="evidence" value="ECO:0007669"/>
    <property type="project" value="UniProtKB-SubCell"/>
</dbReference>
<dbReference type="GO" id="GO:1990904">
    <property type="term" value="C:ribonucleoprotein complex"/>
    <property type="evidence" value="ECO:0000250"/>
    <property type="project" value="UniProtKB"/>
</dbReference>
<dbReference type="GO" id="GO:0032040">
    <property type="term" value="C:small-subunit processome"/>
    <property type="evidence" value="ECO:0000250"/>
    <property type="project" value="UniProtKB"/>
</dbReference>
<dbReference type="GO" id="GO:0003735">
    <property type="term" value="F:structural constituent of ribosome"/>
    <property type="evidence" value="ECO:0000314"/>
    <property type="project" value="UniProtKB"/>
</dbReference>
<dbReference type="GO" id="GO:0002181">
    <property type="term" value="P:cytoplasmic translation"/>
    <property type="evidence" value="ECO:0000303"/>
    <property type="project" value="ComplexPortal"/>
</dbReference>
<dbReference type="GO" id="GO:0042274">
    <property type="term" value="P:ribosomal small subunit biogenesis"/>
    <property type="evidence" value="ECO:0000250"/>
    <property type="project" value="UniProtKB"/>
</dbReference>
<dbReference type="CDD" id="cd11380">
    <property type="entry name" value="Ribosomal_S8e_like"/>
    <property type="match status" value="1"/>
</dbReference>
<dbReference type="FunFam" id="1.10.168.20:FF:000001">
    <property type="entry name" value="40S ribosomal protein S8"/>
    <property type="match status" value="1"/>
</dbReference>
<dbReference type="FunFam" id="3.10.290.70:FF:000004">
    <property type="entry name" value="40S ribosomal protein S8"/>
    <property type="match status" value="1"/>
</dbReference>
<dbReference type="FunFam" id="3.10.290.70:FF:000005">
    <property type="entry name" value="40S ribosomal protein S8"/>
    <property type="match status" value="1"/>
</dbReference>
<dbReference type="Gene3D" id="3.10.290.70">
    <property type="match status" value="1"/>
</dbReference>
<dbReference type="Gene3D" id="1.10.168.20">
    <property type="entry name" value="Ribosomal protein S8e, subdomain"/>
    <property type="match status" value="1"/>
</dbReference>
<dbReference type="InterPro" id="IPR001047">
    <property type="entry name" value="Ribosomal_eS8"/>
</dbReference>
<dbReference type="InterPro" id="IPR018283">
    <property type="entry name" value="Ribosomal_eS8_CS"/>
</dbReference>
<dbReference type="InterPro" id="IPR042563">
    <property type="entry name" value="Ribosomal_protein_eS8_euk"/>
</dbReference>
<dbReference type="InterPro" id="IPR022309">
    <property type="entry name" value="Ribosomal_Se8/biogenesis_NSA2"/>
</dbReference>
<dbReference type="NCBIfam" id="TIGR00307">
    <property type="entry name" value="eS8"/>
    <property type="match status" value="1"/>
</dbReference>
<dbReference type="PANTHER" id="PTHR10394">
    <property type="entry name" value="40S RIBOSOMAL PROTEIN S8"/>
    <property type="match status" value="1"/>
</dbReference>
<dbReference type="Pfam" id="PF01201">
    <property type="entry name" value="Ribosomal_S8e"/>
    <property type="match status" value="1"/>
</dbReference>
<dbReference type="PROSITE" id="PS01193">
    <property type="entry name" value="RIBOSOMAL_S8E"/>
    <property type="match status" value="1"/>
</dbReference>
<reference key="1">
    <citation type="journal article" date="1993" name="Nucleic Acids Res.">
        <title>Primary sequence of the mouse ribosomal protein S8.</title>
        <authorList>
            <person name="Su Y."/>
            <person name="Raj N.B.K."/>
            <person name="Au W.-C."/>
            <person name="Pitha P.M."/>
        </authorList>
    </citation>
    <scope>NUCLEOTIDE SEQUENCE [MRNA]</scope>
    <source>
        <strain>C57BL/6J</strain>
        <tissue>Spleen</tissue>
    </source>
</reference>
<reference key="2">
    <citation type="journal article" date="2005" name="Science">
        <title>The transcriptional landscape of the mammalian genome.</title>
        <authorList>
            <person name="Carninci P."/>
            <person name="Kasukawa T."/>
            <person name="Katayama S."/>
            <person name="Gough J."/>
            <person name="Frith M.C."/>
            <person name="Maeda N."/>
            <person name="Oyama R."/>
            <person name="Ravasi T."/>
            <person name="Lenhard B."/>
            <person name="Wells C."/>
            <person name="Kodzius R."/>
            <person name="Shimokawa K."/>
            <person name="Bajic V.B."/>
            <person name="Brenner S.E."/>
            <person name="Batalov S."/>
            <person name="Forrest A.R."/>
            <person name="Zavolan M."/>
            <person name="Davis M.J."/>
            <person name="Wilming L.G."/>
            <person name="Aidinis V."/>
            <person name="Allen J.E."/>
            <person name="Ambesi-Impiombato A."/>
            <person name="Apweiler R."/>
            <person name="Aturaliya R.N."/>
            <person name="Bailey T.L."/>
            <person name="Bansal M."/>
            <person name="Baxter L."/>
            <person name="Beisel K.W."/>
            <person name="Bersano T."/>
            <person name="Bono H."/>
            <person name="Chalk A.M."/>
            <person name="Chiu K.P."/>
            <person name="Choudhary V."/>
            <person name="Christoffels A."/>
            <person name="Clutterbuck D.R."/>
            <person name="Crowe M.L."/>
            <person name="Dalla E."/>
            <person name="Dalrymple B.P."/>
            <person name="de Bono B."/>
            <person name="Della Gatta G."/>
            <person name="di Bernardo D."/>
            <person name="Down T."/>
            <person name="Engstrom P."/>
            <person name="Fagiolini M."/>
            <person name="Faulkner G."/>
            <person name="Fletcher C.F."/>
            <person name="Fukushima T."/>
            <person name="Furuno M."/>
            <person name="Futaki S."/>
            <person name="Gariboldi M."/>
            <person name="Georgii-Hemming P."/>
            <person name="Gingeras T.R."/>
            <person name="Gojobori T."/>
            <person name="Green R.E."/>
            <person name="Gustincich S."/>
            <person name="Harbers M."/>
            <person name="Hayashi Y."/>
            <person name="Hensch T.K."/>
            <person name="Hirokawa N."/>
            <person name="Hill D."/>
            <person name="Huminiecki L."/>
            <person name="Iacono M."/>
            <person name="Ikeo K."/>
            <person name="Iwama A."/>
            <person name="Ishikawa T."/>
            <person name="Jakt M."/>
            <person name="Kanapin A."/>
            <person name="Katoh M."/>
            <person name="Kawasawa Y."/>
            <person name="Kelso J."/>
            <person name="Kitamura H."/>
            <person name="Kitano H."/>
            <person name="Kollias G."/>
            <person name="Krishnan S.P."/>
            <person name="Kruger A."/>
            <person name="Kummerfeld S.K."/>
            <person name="Kurochkin I.V."/>
            <person name="Lareau L.F."/>
            <person name="Lazarevic D."/>
            <person name="Lipovich L."/>
            <person name="Liu J."/>
            <person name="Liuni S."/>
            <person name="McWilliam S."/>
            <person name="Madan Babu M."/>
            <person name="Madera M."/>
            <person name="Marchionni L."/>
            <person name="Matsuda H."/>
            <person name="Matsuzawa S."/>
            <person name="Miki H."/>
            <person name="Mignone F."/>
            <person name="Miyake S."/>
            <person name="Morris K."/>
            <person name="Mottagui-Tabar S."/>
            <person name="Mulder N."/>
            <person name="Nakano N."/>
            <person name="Nakauchi H."/>
            <person name="Ng P."/>
            <person name="Nilsson R."/>
            <person name="Nishiguchi S."/>
            <person name="Nishikawa S."/>
            <person name="Nori F."/>
            <person name="Ohara O."/>
            <person name="Okazaki Y."/>
            <person name="Orlando V."/>
            <person name="Pang K.C."/>
            <person name="Pavan W.J."/>
            <person name="Pavesi G."/>
            <person name="Pesole G."/>
            <person name="Petrovsky N."/>
            <person name="Piazza S."/>
            <person name="Reed J."/>
            <person name="Reid J.F."/>
            <person name="Ring B.Z."/>
            <person name="Ringwald M."/>
            <person name="Rost B."/>
            <person name="Ruan Y."/>
            <person name="Salzberg S.L."/>
            <person name="Sandelin A."/>
            <person name="Schneider C."/>
            <person name="Schoenbach C."/>
            <person name="Sekiguchi K."/>
            <person name="Semple C.A."/>
            <person name="Seno S."/>
            <person name="Sessa L."/>
            <person name="Sheng Y."/>
            <person name="Shibata Y."/>
            <person name="Shimada H."/>
            <person name="Shimada K."/>
            <person name="Silva D."/>
            <person name="Sinclair B."/>
            <person name="Sperling S."/>
            <person name="Stupka E."/>
            <person name="Sugiura K."/>
            <person name="Sultana R."/>
            <person name="Takenaka Y."/>
            <person name="Taki K."/>
            <person name="Tammoja K."/>
            <person name="Tan S.L."/>
            <person name="Tang S."/>
            <person name="Taylor M.S."/>
            <person name="Tegner J."/>
            <person name="Teichmann S.A."/>
            <person name="Ueda H.R."/>
            <person name="van Nimwegen E."/>
            <person name="Verardo R."/>
            <person name="Wei C.L."/>
            <person name="Yagi K."/>
            <person name="Yamanishi H."/>
            <person name="Zabarovsky E."/>
            <person name="Zhu S."/>
            <person name="Zimmer A."/>
            <person name="Hide W."/>
            <person name="Bult C."/>
            <person name="Grimmond S.M."/>
            <person name="Teasdale R.D."/>
            <person name="Liu E.T."/>
            <person name="Brusic V."/>
            <person name="Quackenbush J."/>
            <person name="Wahlestedt C."/>
            <person name="Mattick J.S."/>
            <person name="Hume D.A."/>
            <person name="Kai C."/>
            <person name="Sasaki D."/>
            <person name="Tomaru Y."/>
            <person name="Fukuda S."/>
            <person name="Kanamori-Katayama M."/>
            <person name="Suzuki M."/>
            <person name="Aoki J."/>
            <person name="Arakawa T."/>
            <person name="Iida J."/>
            <person name="Imamura K."/>
            <person name="Itoh M."/>
            <person name="Kato T."/>
            <person name="Kawaji H."/>
            <person name="Kawagashira N."/>
            <person name="Kawashima T."/>
            <person name="Kojima M."/>
            <person name="Kondo S."/>
            <person name="Konno H."/>
            <person name="Nakano K."/>
            <person name="Ninomiya N."/>
            <person name="Nishio T."/>
            <person name="Okada M."/>
            <person name="Plessy C."/>
            <person name="Shibata K."/>
            <person name="Shiraki T."/>
            <person name="Suzuki S."/>
            <person name="Tagami M."/>
            <person name="Waki K."/>
            <person name="Watahiki A."/>
            <person name="Okamura-Oho Y."/>
            <person name="Suzuki H."/>
            <person name="Kawai J."/>
            <person name="Hayashizaki Y."/>
        </authorList>
    </citation>
    <scope>NUCLEOTIDE SEQUENCE [LARGE SCALE MRNA]</scope>
    <source>
        <strain>C57BL/6J</strain>
        <strain>NOD</strain>
        <tissue>Liver</tissue>
        <tissue>Thymus</tissue>
        <tissue>Tongue</tissue>
    </source>
</reference>
<reference key="3">
    <citation type="journal article" date="2004" name="Genome Res.">
        <title>The status, quality, and expansion of the NIH full-length cDNA project: the Mammalian Gene Collection (MGC).</title>
        <authorList>
            <consortium name="The MGC Project Team"/>
        </authorList>
    </citation>
    <scope>NUCLEOTIDE SEQUENCE [LARGE SCALE MRNA]</scope>
    <source>
        <strain>C3H/He</strain>
        <strain>C57BL/6J</strain>
        <tissue>Brain</tissue>
        <tissue>Colon</tissue>
        <tissue>Osteoblast</tissue>
    </source>
</reference>
<reference key="4">
    <citation type="journal article" date="2010" name="Cell">
        <title>A tissue-specific atlas of mouse protein phosphorylation and expression.</title>
        <authorList>
            <person name="Huttlin E.L."/>
            <person name="Jedrychowski M.P."/>
            <person name="Elias J.E."/>
            <person name="Goswami T."/>
            <person name="Rad R."/>
            <person name="Beausoleil S.A."/>
            <person name="Villen J."/>
            <person name="Haas W."/>
            <person name="Sowa M.E."/>
            <person name="Gygi S.P."/>
        </authorList>
    </citation>
    <scope>PHOSPHORYLATION [LARGE SCALE ANALYSIS] AT THR-130</scope>
    <scope>IDENTIFICATION BY MASS SPECTROMETRY [LARGE SCALE ANALYSIS]</scope>
    <source>
        <tissue>Brain</tissue>
        <tissue>Brown adipose tissue</tissue>
        <tissue>Heart</tissue>
        <tissue>Kidney</tissue>
        <tissue>Liver</tissue>
        <tissue>Lung</tissue>
        <tissue>Pancreas</tissue>
        <tissue>Spleen</tissue>
        <tissue>Testis</tissue>
    </source>
</reference>
<reference key="5">
    <citation type="journal article" date="2013" name="Mol. Cell">
        <title>SIRT5-mediated lysine desuccinylation impacts diverse metabolic pathways.</title>
        <authorList>
            <person name="Park J."/>
            <person name="Chen Y."/>
            <person name="Tishkoff D.X."/>
            <person name="Peng C."/>
            <person name="Tan M."/>
            <person name="Dai L."/>
            <person name="Xie Z."/>
            <person name="Zhang Y."/>
            <person name="Zwaans B.M."/>
            <person name="Skinner M.E."/>
            <person name="Lombard D.B."/>
            <person name="Zhao Y."/>
        </authorList>
    </citation>
    <scope>ACETYLATION [LARGE SCALE ANALYSIS] AT LYS-37 AND LYS-128</scope>
    <scope>IDENTIFICATION BY MASS SPECTROMETRY [LARGE SCALE ANALYSIS]</scope>
    <source>
        <tissue>Embryonic fibroblast</tissue>
    </source>
</reference>
<reference evidence="5 6" key="6">
    <citation type="journal article" date="2022" name="Nature">
        <title>A male germ-cell-specific ribosome controls male fertility.</title>
        <authorList>
            <person name="Li H."/>
            <person name="Huo Y."/>
            <person name="He X."/>
            <person name="Yao L."/>
            <person name="Zhang H."/>
            <person name="Cui Y."/>
            <person name="Xiao H."/>
            <person name="Xie W."/>
            <person name="Zhang D."/>
            <person name="Wang Y."/>
            <person name="Zhang S."/>
            <person name="Tu H."/>
            <person name="Cheng Y."/>
            <person name="Guo Y."/>
            <person name="Cao X."/>
            <person name="Zhu Y."/>
            <person name="Jiang T."/>
            <person name="Guo X."/>
            <person name="Qin Y."/>
            <person name="Sha J."/>
        </authorList>
    </citation>
    <scope>STRUCTURE BY ELECTRON MICROSCOPY (3.03 ANGSTROMS) OF RIBOSOME</scope>
    <scope>FUNCTION</scope>
    <scope>SUBUNIT</scope>
    <scope>SUBCELLULAR LOCATION</scope>
</reference>
<proteinExistence type="evidence at protein level"/>
<accession>P62242</accession>
<accession>P09058</accession>
<accession>Q8C2G6</accession>
<sequence>MGISRDNWHKRRKTGGKRKPYHKKRKYELGRPAANTKIGPRRIHTVRVRGGNKKYRALRLDVGNFSWGSECCTRKTRIIDVVYNASNNELVRTKTLVKNCIVLIDSTPYRQWYESHYALPLGRKKGAKLTPEEEEILNKKRSKKIQKKYDERKKNAKISSLLEEQFQQGKLLACIASRPGQCGRADGYVLEGKELEFYLRKIKARKGK</sequence>
<keyword id="KW-0002">3D-structure</keyword>
<keyword id="KW-0007">Acetylation</keyword>
<keyword id="KW-0963">Cytoplasm</keyword>
<keyword id="KW-1017">Isopeptide bond</keyword>
<keyword id="KW-0449">Lipoprotein</keyword>
<keyword id="KW-0472">Membrane</keyword>
<keyword id="KW-0519">Myristate</keyword>
<keyword id="KW-0539">Nucleus</keyword>
<keyword id="KW-0597">Phosphoprotein</keyword>
<keyword id="KW-1185">Reference proteome</keyword>
<keyword id="KW-0687">Ribonucleoprotein</keyword>
<keyword id="KW-0689">Ribosomal protein</keyword>
<keyword id="KW-0832">Ubl conjugation</keyword>
<evidence type="ECO:0000250" key="1">
    <source>
        <dbReference type="UniProtKB" id="P62241"/>
    </source>
</evidence>
<evidence type="ECO:0000256" key="2">
    <source>
        <dbReference type="SAM" id="MobiDB-lite"/>
    </source>
</evidence>
<evidence type="ECO:0000269" key="3">
    <source>
    </source>
</evidence>
<evidence type="ECO:0000305" key="4"/>
<evidence type="ECO:0007744" key="5">
    <source>
        <dbReference type="PDB" id="7CPU"/>
    </source>
</evidence>
<evidence type="ECO:0007744" key="6">
    <source>
        <dbReference type="PDB" id="7CPV"/>
    </source>
</evidence>
<evidence type="ECO:0007744" key="7">
    <source>
    </source>
</evidence>
<evidence type="ECO:0007744" key="8">
    <source>
    </source>
</evidence>
<comment type="function">
    <text evidence="1 3">Component of the small ribosomal subunit (PubMed:36517592). The ribosome is a large ribonucleoprotein complex responsible for the synthesis of proteins in the cell (PubMed:36517592). Part of the small subunit (SSU) processome, first precursor of the small eukaryotic ribosomal subunit. During the assembly of the SSU processome in the nucleolus, many ribosome biogenesis factors, an RNA chaperone and ribosomal proteins associate with the nascent pre-rRNA and work in concert to generate RNA folding, modifications, rearrangements and cleavage as well as targeted degradation of pre-ribosomal RNA by the RNA exosome (By similarity).</text>
</comment>
<comment type="subunit">
    <text evidence="1 3">Component of the small ribosomal subunit (PubMed:36517592). Identified in a IGF2BP1-dependent mRNP granule complex containing untranslated mRNAs (By similarity). Part of the small subunit (SSU) processome, composed of more than 70 proteins and the RNA chaperone small nucleolar RNA (snoRNA) U3 (By similarity).</text>
</comment>
<comment type="subcellular location">
    <subcellularLocation>
        <location evidence="3">Cytoplasm</location>
    </subcellularLocation>
    <subcellularLocation>
        <location evidence="1">Membrane</location>
        <topology evidence="1">Lipid-anchor</topology>
    </subcellularLocation>
    <subcellularLocation>
        <location evidence="1">Nucleus</location>
        <location evidence="1">Nucleolus</location>
    </subcellularLocation>
    <text evidence="1">Localized in cytoplasmic mRNP granules containing untranslated mRNAs.</text>
</comment>
<comment type="similarity">
    <text evidence="4">Belongs to the eukaryotic ribosomal protein eS8 family.</text>
</comment>